<proteinExistence type="inferred from homology"/>
<keyword id="KW-0997">Cell inner membrane</keyword>
<keyword id="KW-1003">Cell membrane</keyword>
<keyword id="KW-0342">GTP-binding</keyword>
<keyword id="KW-0378">Hydrolase</keyword>
<keyword id="KW-0472">Membrane</keyword>
<keyword id="KW-0547">Nucleotide-binding</keyword>
<keyword id="KW-0648">Protein biosynthesis</keyword>
<feature type="chain" id="PRO_1000190823" description="Elongation factor 4">
    <location>
        <begin position="1"/>
        <end position="596"/>
    </location>
</feature>
<feature type="domain" description="tr-type G">
    <location>
        <begin position="2"/>
        <end position="184"/>
    </location>
</feature>
<feature type="binding site" evidence="1">
    <location>
        <begin position="14"/>
        <end position="19"/>
    </location>
    <ligand>
        <name>GTP</name>
        <dbReference type="ChEBI" id="CHEBI:37565"/>
    </ligand>
</feature>
<feature type="binding site" evidence="1">
    <location>
        <begin position="131"/>
        <end position="134"/>
    </location>
    <ligand>
        <name>GTP</name>
        <dbReference type="ChEBI" id="CHEBI:37565"/>
    </ligand>
</feature>
<sequence>MSHIRNFSIIAHIDHGKSTLADRFIQMCGGLSAREMEAQVLDSMDLERERGITIKAHSVTLHYKAQDGKTYQLNFIDTPGHVDFTYEVSRSLAACEGALLVVDAGQGVEAQSVANCYTAIEQGLEVMPVLNKMDLPQADPDRVKDEIEKIIGIDATDAVACSAKSGMGVDEVLERLVHTIPAPEGEIDAPLQALIIDSWFDNYLGVVSLVRVRHGRVKKGDKILVKSTGKVHLVDSVGVFTPKHTQTADLKAGEVGFIIASIKDIHGAPVGDTLTLSSTPEVEVLAGFKKIQPQVYAGLFPVSSDDFEDFRDALQKLTLNDSSLQYMPESSDALGFGFRCGFLGMLHMEIIQERLEREYDLDLITTAPSVIYELELKTGETIVVDNPSKLPDVSSVTDFREPIVTATILVPQEHLGNVITLCIEKRGVQRDMQFLGSQVQVRYDMPMNEVVLDFFDRLKSTSRGYASLDYHFDRYQSANLVKLDVLINGDKVDALALIVHRDNAAYKGRALTEKMKELIPRQMFDVAIQAAIGGQIIARTTVKALRKNVLAKCYGGDVSRKKKLLEKQKAGKKRMKQVGNVEIPQEAFLAVLRLDS</sequence>
<evidence type="ECO:0000255" key="1">
    <source>
        <dbReference type="HAMAP-Rule" id="MF_00071"/>
    </source>
</evidence>
<protein>
    <recommendedName>
        <fullName evidence="1">Elongation factor 4</fullName>
        <shortName evidence="1">EF-4</shortName>
        <ecNumber evidence="1">3.6.5.n1</ecNumber>
    </recommendedName>
    <alternativeName>
        <fullName evidence="1">Ribosomal back-translocase LepA</fullName>
    </alternativeName>
</protein>
<gene>
    <name evidence="1" type="primary">lepA</name>
    <name type="ordered locus">PputGB1_4376</name>
</gene>
<accession>B0KV29</accession>
<reference key="1">
    <citation type="submission" date="2008-01" db="EMBL/GenBank/DDBJ databases">
        <title>Complete sequence of Pseudomonas putida GB-1.</title>
        <authorList>
            <consortium name="US DOE Joint Genome Institute"/>
            <person name="Copeland A."/>
            <person name="Lucas S."/>
            <person name="Lapidus A."/>
            <person name="Barry K."/>
            <person name="Glavina del Rio T."/>
            <person name="Dalin E."/>
            <person name="Tice H."/>
            <person name="Pitluck S."/>
            <person name="Bruce D."/>
            <person name="Goodwin L."/>
            <person name="Chertkov O."/>
            <person name="Brettin T."/>
            <person name="Detter J.C."/>
            <person name="Han C."/>
            <person name="Kuske C.R."/>
            <person name="Schmutz J."/>
            <person name="Larimer F."/>
            <person name="Land M."/>
            <person name="Hauser L."/>
            <person name="Kyrpides N."/>
            <person name="Kim E."/>
            <person name="McCarthy J.K."/>
            <person name="Richardson P."/>
        </authorList>
    </citation>
    <scope>NUCLEOTIDE SEQUENCE [LARGE SCALE GENOMIC DNA]</scope>
    <source>
        <strain>GB-1</strain>
    </source>
</reference>
<dbReference type="EC" id="3.6.5.n1" evidence="1"/>
<dbReference type="EMBL" id="CP000926">
    <property type="protein sequence ID" value="ABZ00265.1"/>
    <property type="molecule type" value="Genomic_DNA"/>
</dbReference>
<dbReference type="SMR" id="B0KV29"/>
<dbReference type="KEGG" id="ppg:PputGB1_4376"/>
<dbReference type="eggNOG" id="COG0481">
    <property type="taxonomic scope" value="Bacteria"/>
</dbReference>
<dbReference type="HOGENOM" id="CLU_009995_3_3_6"/>
<dbReference type="Proteomes" id="UP000002157">
    <property type="component" value="Chromosome"/>
</dbReference>
<dbReference type="GO" id="GO:0005886">
    <property type="term" value="C:plasma membrane"/>
    <property type="evidence" value="ECO:0007669"/>
    <property type="project" value="UniProtKB-SubCell"/>
</dbReference>
<dbReference type="GO" id="GO:0005525">
    <property type="term" value="F:GTP binding"/>
    <property type="evidence" value="ECO:0007669"/>
    <property type="project" value="UniProtKB-UniRule"/>
</dbReference>
<dbReference type="GO" id="GO:0003924">
    <property type="term" value="F:GTPase activity"/>
    <property type="evidence" value="ECO:0007669"/>
    <property type="project" value="UniProtKB-UniRule"/>
</dbReference>
<dbReference type="GO" id="GO:0097216">
    <property type="term" value="F:guanosine tetraphosphate binding"/>
    <property type="evidence" value="ECO:0007669"/>
    <property type="project" value="UniProtKB-ARBA"/>
</dbReference>
<dbReference type="GO" id="GO:0043022">
    <property type="term" value="F:ribosome binding"/>
    <property type="evidence" value="ECO:0007669"/>
    <property type="project" value="UniProtKB-UniRule"/>
</dbReference>
<dbReference type="GO" id="GO:0003746">
    <property type="term" value="F:translation elongation factor activity"/>
    <property type="evidence" value="ECO:0007669"/>
    <property type="project" value="UniProtKB-UniRule"/>
</dbReference>
<dbReference type="GO" id="GO:0045727">
    <property type="term" value="P:positive regulation of translation"/>
    <property type="evidence" value="ECO:0007669"/>
    <property type="project" value="UniProtKB-UniRule"/>
</dbReference>
<dbReference type="CDD" id="cd03699">
    <property type="entry name" value="EF4_II"/>
    <property type="match status" value="1"/>
</dbReference>
<dbReference type="CDD" id="cd16260">
    <property type="entry name" value="EF4_III"/>
    <property type="match status" value="1"/>
</dbReference>
<dbReference type="CDD" id="cd01890">
    <property type="entry name" value="LepA"/>
    <property type="match status" value="1"/>
</dbReference>
<dbReference type="CDD" id="cd03709">
    <property type="entry name" value="lepA_C"/>
    <property type="match status" value="1"/>
</dbReference>
<dbReference type="FunFam" id="3.40.50.300:FF:000078">
    <property type="entry name" value="Elongation factor 4"/>
    <property type="match status" value="1"/>
</dbReference>
<dbReference type="FunFam" id="2.40.30.10:FF:000015">
    <property type="entry name" value="Translation factor GUF1, mitochondrial"/>
    <property type="match status" value="1"/>
</dbReference>
<dbReference type="FunFam" id="3.30.70.240:FF:000007">
    <property type="entry name" value="Translation factor GUF1, mitochondrial"/>
    <property type="match status" value="1"/>
</dbReference>
<dbReference type="FunFam" id="3.30.70.2570:FF:000001">
    <property type="entry name" value="Translation factor GUF1, mitochondrial"/>
    <property type="match status" value="1"/>
</dbReference>
<dbReference type="FunFam" id="3.30.70.870:FF:000004">
    <property type="entry name" value="Translation factor GUF1, mitochondrial"/>
    <property type="match status" value="1"/>
</dbReference>
<dbReference type="Gene3D" id="3.30.70.240">
    <property type="match status" value="1"/>
</dbReference>
<dbReference type="Gene3D" id="3.30.70.2570">
    <property type="entry name" value="Elongation factor 4, C-terminal domain"/>
    <property type="match status" value="1"/>
</dbReference>
<dbReference type="Gene3D" id="3.30.70.870">
    <property type="entry name" value="Elongation Factor G (Translational Gtpase), domain 3"/>
    <property type="match status" value="1"/>
</dbReference>
<dbReference type="Gene3D" id="3.40.50.300">
    <property type="entry name" value="P-loop containing nucleotide triphosphate hydrolases"/>
    <property type="match status" value="1"/>
</dbReference>
<dbReference type="Gene3D" id="2.40.30.10">
    <property type="entry name" value="Translation factors"/>
    <property type="match status" value="1"/>
</dbReference>
<dbReference type="HAMAP" id="MF_00071">
    <property type="entry name" value="LepA"/>
    <property type="match status" value="1"/>
</dbReference>
<dbReference type="InterPro" id="IPR006297">
    <property type="entry name" value="EF-4"/>
</dbReference>
<dbReference type="InterPro" id="IPR035647">
    <property type="entry name" value="EFG_III/V"/>
</dbReference>
<dbReference type="InterPro" id="IPR000640">
    <property type="entry name" value="EFG_V-like"/>
</dbReference>
<dbReference type="InterPro" id="IPR004161">
    <property type="entry name" value="EFTu-like_2"/>
</dbReference>
<dbReference type="InterPro" id="IPR038363">
    <property type="entry name" value="LepA_C_sf"/>
</dbReference>
<dbReference type="InterPro" id="IPR013842">
    <property type="entry name" value="LepA_CTD"/>
</dbReference>
<dbReference type="InterPro" id="IPR035654">
    <property type="entry name" value="LepA_IV"/>
</dbReference>
<dbReference type="InterPro" id="IPR027417">
    <property type="entry name" value="P-loop_NTPase"/>
</dbReference>
<dbReference type="InterPro" id="IPR005225">
    <property type="entry name" value="Small_GTP-bd"/>
</dbReference>
<dbReference type="InterPro" id="IPR000795">
    <property type="entry name" value="T_Tr_GTP-bd_dom"/>
</dbReference>
<dbReference type="NCBIfam" id="TIGR01393">
    <property type="entry name" value="lepA"/>
    <property type="match status" value="1"/>
</dbReference>
<dbReference type="NCBIfam" id="TIGR00231">
    <property type="entry name" value="small_GTP"/>
    <property type="match status" value="1"/>
</dbReference>
<dbReference type="PANTHER" id="PTHR43512:SF4">
    <property type="entry name" value="TRANSLATION FACTOR GUF1 HOMOLOG, CHLOROPLASTIC"/>
    <property type="match status" value="1"/>
</dbReference>
<dbReference type="PANTHER" id="PTHR43512">
    <property type="entry name" value="TRANSLATION FACTOR GUF1-RELATED"/>
    <property type="match status" value="1"/>
</dbReference>
<dbReference type="Pfam" id="PF00679">
    <property type="entry name" value="EFG_C"/>
    <property type="match status" value="1"/>
</dbReference>
<dbReference type="Pfam" id="PF00009">
    <property type="entry name" value="GTP_EFTU"/>
    <property type="match status" value="1"/>
</dbReference>
<dbReference type="Pfam" id="PF03144">
    <property type="entry name" value="GTP_EFTU_D2"/>
    <property type="match status" value="1"/>
</dbReference>
<dbReference type="Pfam" id="PF06421">
    <property type="entry name" value="LepA_C"/>
    <property type="match status" value="1"/>
</dbReference>
<dbReference type="PRINTS" id="PR00315">
    <property type="entry name" value="ELONGATNFCT"/>
</dbReference>
<dbReference type="SUPFAM" id="SSF54980">
    <property type="entry name" value="EF-G C-terminal domain-like"/>
    <property type="match status" value="2"/>
</dbReference>
<dbReference type="SUPFAM" id="SSF52540">
    <property type="entry name" value="P-loop containing nucleoside triphosphate hydrolases"/>
    <property type="match status" value="1"/>
</dbReference>
<dbReference type="PROSITE" id="PS51722">
    <property type="entry name" value="G_TR_2"/>
    <property type="match status" value="1"/>
</dbReference>
<comment type="function">
    <text evidence="1">Required for accurate and efficient protein synthesis under certain stress conditions. May act as a fidelity factor of the translation reaction, by catalyzing a one-codon backward translocation of tRNAs on improperly translocated ribosomes. Back-translocation proceeds from a post-translocation (POST) complex to a pre-translocation (PRE) complex, thus giving elongation factor G a second chance to translocate the tRNAs correctly. Binds to ribosomes in a GTP-dependent manner.</text>
</comment>
<comment type="catalytic activity">
    <reaction evidence="1">
        <text>GTP + H2O = GDP + phosphate + H(+)</text>
        <dbReference type="Rhea" id="RHEA:19669"/>
        <dbReference type="ChEBI" id="CHEBI:15377"/>
        <dbReference type="ChEBI" id="CHEBI:15378"/>
        <dbReference type="ChEBI" id="CHEBI:37565"/>
        <dbReference type="ChEBI" id="CHEBI:43474"/>
        <dbReference type="ChEBI" id="CHEBI:58189"/>
        <dbReference type="EC" id="3.6.5.n1"/>
    </reaction>
</comment>
<comment type="subcellular location">
    <subcellularLocation>
        <location evidence="1">Cell inner membrane</location>
        <topology evidence="1">Peripheral membrane protein</topology>
        <orientation evidence="1">Cytoplasmic side</orientation>
    </subcellularLocation>
</comment>
<comment type="similarity">
    <text evidence="1">Belongs to the TRAFAC class translation factor GTPase superfamily. Classic translation factor GTPase family. LepA subfamily.</text>
</comment>
<organism>
    <name type="scientific">Pseudomonas putida (strain GB-1)</name>
    <dbReference type="NCBI Taxonomy" id="76869"/>
    <lineage>
        <taxon>Bacteria</taxon>
        <taxon>Pseudomonadati</taxon>
        <taxon>Pseudomonadota</taxon>
        <taxon>Gammaproteobacteria</taxon>
        <taxon>Pseudomonadales</taxon>
        <taxon>Pseudomonadaceae</taxon>
        <taxon>Pseudomonas</taxon>
    </lineage>
</organism>
<name>LEPA_PSEPG</name>